<dbReference type="EC" id="2.1.1.-" evidence="1"/>
<dbReference type="EC" id="2.1.1.35" evidence="1"/>
<dbReference type="EMBL" id="CP000308">
    <property type="protein sequence ID" value="ABG12080.1"/>
    <property type="molecule type" value="Genomic_DNA"/>
</dbReference>
<dbReference type="RefSeq" id="WP_002209474.1">
    <property type="nucleotide sequence ID" value="NZ_CP009906.1"/>
</dbReference>
<dbReference type="SMR" id="Q1CBU2"/>
<dbReference type="GeneID" id="57974789"/>
<dbReference type="KEGG" id="ypa:YPA_0111"/>
<dbReference type="Proteomes" id="UP000001971">
    <property type="component" value="Chromosome"/>
</dbReference>
<dbReference type="GO" id="GO:0005829">
    <property type="term" value="C:cytosol"/>
    <property type="evidence" value="ECO:0007669"/>
    <property type="project" value="TreeGrafter"/>
</dbReference>
<dbReference type="GO" id="GO:0019843">
    <property type="term" value="F:rRNA binding"/>
    <property type="evidence" value="ECO:0007669"/>
    <property type="project" value="TreeGrafter"/>
</dbReference>
<dbReference type="GO" id="GO:0030697">
    <property type="term" value="F:tRNA (uracil(54)-C5)-methyltransferase activity, S-adenosyl methionine-dependent"/>
    <property type="evidence" value="ECO:0007669"/>
    <property type="project" value="UniProtKB-UniRule"/>
</dbReference>
<dbReference type="GO" id="GO:0000049">
    <property type="term" value="F:tRNA binding"/>
    <property type="evidence" value="ECO:0007669"/>
    <property type="project" value="TreeGrafter"/>
</dbReference>
<dbReference type="GO" id="GO:0030488">
    <property type="term" value="P:tRNA methylation"/>
    <property type="evidence" value="ECO:0007669"/>
    <property type="project" value="UniProtKB-UniRule"/>
</dbReference>
<dbReference type="CDD" id="cd02440">
    <property type="entry name" value="AdoMet_MTases"/>
    <property type="match status" value="1"/>
</dbReference>
<dbReference type="FunFam" id="2.40.50.1070:FF:000001">
    <property type="entry name" value="tRNA/tmRNA (uracil-C(5))-methyltransferase"/>
    <property type="match status" value="1"/>
</dbReference>
<dbReference type="FunFam" id="3.40.50.150:FF:000012">
    <property type="entry name" value="tRNA/tmRNA (uracil-C(5))-methyltransferase"/>
    <property type="match status" value="1"/>
</dbReference>
<dbReference type="Gene3D" id="2.40.50.1070">
    <property type="match status" value="1"/>
</dbReference>
<dbReference type="Gene3D" id="3.40.50.150">
    <property type="entry name" value="Vaccinia Virus protein VP39"/>
    <property type="match status" value="1"/>
</dbReference>
<dbReference type="HAMAP" id="MF_01011">
    <property type="entry name" value="RNA_methyltr_TrmA"/>
    <property type="match status" value="1"/>
</dbReference>
<dbReference type="InterPro" id="IPR030390">
    <property type="entry name" value="MeTrfase_TrmA_AS"/>
</dbReference>
<dbReference type="InterPro" id="IPR030391">
    <property type="entry name" value="MeTrfase_TrmA_CS"/>
</dbReference>
<dbReference type="InterPro" id="IPR029063">
    <property type="entry name" value="SAM-dependent_MTases_sf"/>
</dbReference>
<dbReference type="InterPro" id="IPR011869">
    <property type="entry name" value="TrmA_MeTrfase"/>
</dbReference>
<dbReference type="InterPro" id="IPR010280">
    <property type="entry name" value="U5_MeTrfase_fam"/>
</dbReference>
<dbReference type="NCBIfam" id="TIGR02143">
    <property type="entry name" value="trmA_only"/>
    <property type="match status" value="1"/>
</dbReference>
<dbReference type="PANTHER" id="PTHR47790">
    <property type="entry name" value="TRNA/TMRNA (URACIL-C(5))-METHYLTRANSFERASE"/>
    <property type="match status" value="1"/>
</dbReference>
<dbReference type="PANTHER" id="PTHR47790:SF2">
    <property type="entry name" value="TRNA_TMRNA (URACIL-C(5))-METHYLTRANSFERASE"/>
    <property type="match status" value="1"/>
</dbReference>
<dbReference type="Pfam" id="PF05958">
    <property type="entry name" value="tRNA_U5-meth_tr"/>
    <property type="match status" value="1"/>
</dbReference>
<dbReference type="SUPFAM" id="SSF53335">
    <property type="entry name" value="S-adenosyl-L-methionine-dependent methyltransferases"/>
    <property type="match status" value="1"/>
</dbReference>
<dbReference type="PROSITE" id="PS51687">
    <property type="entry name" value="SAM_MT_RNA_M5U"/>
    <property type="match status" value="1"/>
</dbReference>
<dbReference type="PROSITE" id="PS01230">
    <property type="entry name" value="TRMA_1"/>
    <property type="match status" value="1"/>
</dbReference>
<dbReference type="PROSITE" id="PS01231">
    <property type="entry name" value="TRMA_2"/>
    <property type="match status" value="1"/>
</dbReference>
<gene>
    <name evidence="1" type="primary">trmA</name>
    <name type="ordered locus">YPA_0111</name>
</gene>
<sequence>MTPNILPIESYDHQLAEKSARLKAMMLPFQAPEPEIFRSPADHYRMRAEFRVWHDEDDLYHIMFDQQTKQRIRVEQFPVASRLINRLMDALMTAIRAEPLLRRKLFQIDYLSTLSGKLIASLLYHRQLDEEWQQKALELRDQLRAQGFDLQLIGRAAKTKIMLDHDYIDEVLPVAGREMIYRQVENSFTQPNAAVNIHMLEWALDVTQGATGDLLELYCGNGNFSLALARNFERVLATEIAKPSVAAAQYNIAANNIDNVQIIRMSAEEFTQAMQGVREFNRLKGIDLGSYNCETIFVDPPRSGLDHETVKLVQAYPRILYISCNPETLCANLEQLQHTHKISRLALFDQFPYTHHMECGVLLEKRH</sequence>
<evidence type="ECO:0000255" key="1">
    <source>
        <dbReference type="HAMAP-Rule" id="MF_01011"/>
    </source>
</evidence>
<keyword id="KW-0489">Methyltransferase</keyword>
<keyword id="KW-0949">S-adenosyl-L-methionine</keyword>
<keyword id="KW-0808">Transferase</keyword>
<keyword id="KW-0819">tRNA processing</keyword>
<reference key="1">
    <citation type="journal article" date="2006" name="J. Bacteriol.">
        <title>Complete genome sequence of Yersinia pestis strains Antiqua and Nepal516: evidence of gene reduction in an emerging pathogen.</title>
        <authorList>
            <person name="Chain P.S.G."/>
            <person name="Hu P."/>
            <person name="Malfatti S.A."/>
            <person name="Radnedge L."/>
            <person name="Larimer F."/>
            <person name="Vergez L.M."/>
            <person name="Worsham P."/>
            <person name="Chu M.C."/>
            <person name="Andersen G.L."/>
        </authorList>
    </citation>
    <scope>NUCLEOTIDE SEQUENCE [LARGE SCALE GENOMIC DNA]</scope>
    <source>
        <strain>Antiqua</strain>
    </source>
</reference>
<accession>Q1CBU2</accession>
<organism>
    <name type="scientific">Yersinia pestis bv. Antiqua (strain Antiqua)</name>
    <dbReference type="NCBI Taxonomy" id="360102"/>
    <lineage>
        <taxon>Bacteria</taxon>
        <taxon>Pseudomonadati</taxon>
        <taxon>Pseudomonadota</taxon>
        <taxon>Gammaproteobacteria</taxon>
        <taxon>Enterobacterales</taxon>
        <taxon>Yersiniaceae</taxon>
        <taxon>Yersinia</taxon>
    </lineage>
</organism>
<comment type="function">
    <text evidence="1">Dual-specificity methyltransferase that catalyzes the formation of 5-methyluridine at position 54 (m5U54) in all tRNAs, and that of position 341 (m5U341) in tmRNA (transfer-mRNA).</text>
</comment>
<comment type="catalytic activity">
    <reaction evidence="1">
        <text>uridine(54) in tRNA + S-adenosyl-L-methionine = 5-methyluridine(54) in tRNA + S-adenosyl-L-homocysteine + H(+)</text>
        <dbReference type="Rhea" id="RHEA:42712"/>
        <dbReference type="Rhea" id="RHEA-COMP:10167"/>
        <dbReference type="Rhea" id="RHEA-COMP:10193"/>
        <dbReference type="ChEBI" id="CHEBI:15378"/>
        <dbReference type="ChEBI" id="CHEBI:57856"/>
        <dbReference type="ChEBI" id="CHEBI:59789"/>
        <dbReference type="ChEBI" id="CHEBI:65315"/>
        <dbReference type="ChEBI" id="CHEBI:74447"/>
        <dbReference type="EC" id="2.1.1.35"/>
    </reaction>
</comment>
<comment type="catalytic activity">
    <reaction evidence="1">
        <text>uridine(341) in tmRNA + S-adenosyl-L-methionine = 5-methyluridine(341) in tmRNA + S-adenosyl-L-homocysteine + H(+)</text>
        <dbReference type="Rhea" id="RHEA:43612"/>
        <dbReference type="Rhea" id="RHEA-COMP:10630"/>
        <dbReference type="Rhea" id="RHEA-COMP:10631"/>
        <dbReference type="ChEBI" id="CHEBI:15378"/>
        <dbReference type="ChEBI" id="CHEBI:57856"/>
        <dbReference type="ChEBI" id="CHEBI:59789"/>
        <dbReference type="ChEBI" id="CHEBI:65315"/>
        <dbReference type="ChEBI" id="CHEBI:74447"/>
    </reaction>
</comment>
<comment type="similarity">
    <text evidence="1">Belongs to the class I-like SAM-binding methyltransferase superfamily. RNA M5U methyltransferase family. TrmA subfamily.</text>
</comment>
<proteinExistence type="inferred from homology"/>
<name>TRMA_YERPA</name>
<feature type="chain" id="PRO_0000281473" description="tRNA/tmRNA (uracil-C(5))-methyltransferase">
    <location>
        <begin position="1"/>
        <end position="367"/>
    </location>
</feature>
<feature type="active site" description="Nucleophile" evidence="1">
    <location>
        <position position="324"/>
    </location>
</feature>
<feature type="active site" description="Proton acceptor" evidence="1">
    <location>
        <position position="358"/>
    </location>
</feature>
<feature type="binding site" evidence="1">
    <location>
        <position position="190"/>
    </location>
    <ligand>
        <name>S-adenosyl-L-methionine</name>
        <dbReference type="ChEBI" id="CHEBI:59789"/>
    </ligand>
</feature>
<feature type="binding site" evidence="1">
    <location>
        <position position="218"/>
    </location>
    <ligand>
        <name>S-adenosyl-L-methionine</name>
        <dbReference type="ChEBI" id="CHEBI:59789"/>
    </ligand>
</feature>
<feature type="binding site" evidence="1">
    <location>
        <position position="223"/>
    </location>
    <ligand>
        <name>S-adenosyl-L-methionine</name>
        <dbReference type="ChEBI" id="CHEBI:59789"/>
    </ligand>
</feature>
<feature type="binding site" evidence="1">
    <location>
        <position position="239"/>
    </location>
    <ligand>
        <name>S-adenosyl-L-methionine</name>
        <dbReference type="ChEBI" id="CHEBI:59789"/>
    </ligand>
</feature>
<feature type="binding site" evidence="1">
    <location>
        <position position="299"/>
    </location>
    <ligand>
        <name>S-adenosyl-L-methionine</name>
        <dbReference type="ChEBI" id="CHEBI:59789"/>
    </ligand>
</feature>
<protein>
    <recommendedName>
        <fullName evidence="1">tRNA/tmRNA (uracil-C(5))-methyltransferase</fullName>
        <ecNumber evidence="1">2.1.1.-</ecNumber>
        <ecNumber evidence="1">2.1.1.35</ecNumber>
    </recommendedName>
    <alternativeName>
        <fullName evidence="1">tRNA (uracil(54)-C(5))-methyltransferase</fullName>
    </alternativeName>
    <alternativeName>
        <fullName evidence="1">tRNA(m5U54)-methyltransferase</fullName>
        <shortName evidence="1">RUMT</shortName>
    </alternativeName>
    <alternativeName>
        <fullName evidence="1">tmRNA (uracil(341)-C(5))-methyltransferase</fullName>
    </alternativeName>
</protein>